<organism>
    <name type="scientific">Myotis sicarius</name>
    <name type="common">Mandelli's mouse-eared bat</name>
    <dbReference type="NCBI Taxonomy" id="294649"/>
    <lineage>
        <taxon>Eukaryota</taxon>
        <taxon>Metazoa</taxon>
        <taxon>Chordata</taxon>
        <taxon>Craniata</taxon>
        <taxon>Vertebrata</taxon>
        <taxon>Euteleostomi</taxon>
        <taxon>Mammalia</taxon>
        <taxon>Eutheria</taxon>
        <taxon>Laurasiatheria</taxon>
        <taxon>Chiroptera</taxon>
        <taxon>Yangochiroptera</taxon>
        <taxon>Vespertilionidae</taxon>
        <taxon>Myotis</taxon>
    </lineage>
</organism>
<feature type="chain" id="PRO_0000254733" description="Cytochrome b">
    <location>
        <begin position="1"/>
        <end position="379"/>
    </location>
</feature>
<feature type="transmembrane region" description="Helical" evidence="2">
    <location>
        <begin position="33"/>
        <end position="53"/>
    </location>
</feature>
<feature type="transmembrane region" description="Helical" evidence="2">
    <location>
        <begin position="77"/>
        <end position="98"/>
    </location>
</feature>
<feature type="transmembrane region" description="Helical" evidence="2">
    <location>
        <begin position="113"/>
        <end position="133"/>
    </location>
</feature>
<feature type="transmembrane region" description="Helical" evidence="2">
    <location>
        <begin position="178"/>
        <end position="198"/>
    </location>
</feature>
<feature type="transmembrane region" description="Helical" evidence="2">
    <location>
        <begin position="226"/>
        <end position="246"/>
    </location>
</feature>
<feature type="transmembrane region" description="Helical" evidence="2">
    <location>
        <begin position="288"/>
        <end position="308"/>
    </location>
</feature>
<feature type="transmembrane region" description="Helical" evidence="2">
    <location>
        <begin position="320"/>
        <end position="340"/>
    </location>
</feature>
<feature type="transmembrane region" description="Helical" evidence="2">
    <location>
        <begin position="347"/>
        <end position="367"/>
    </location>
</feature>
<feature type="binding site" description="axial binding residue" evidence="2">
    <location>
        <position position="83"/>
    </location>
    <ligand>
        <name>heme b</name>
        <dbReference type="ChEBI" id="CHEBI:60344"/>
        <label>b562</label>
    </ligand>
    <ligandPart>
        <name>Fe</name>
        <dbReference type="ChEBI" id="CHEBI:18248"/>
    </ligandPart>
</feature>
<feature type="binding site" description="axial binding residue" evidence="2">
    <location>
        <position position="97"/>
    </location>
    <ligand>
        <name>heme b</name>
        <dbReference type="ChEBI" id="CHEBI:60344"/>
        <label>b566</label>
    </ligand>
    <ligandPart>
        <name>Fe</name>
        <dbReference type="ChEBI" id="CHEBI:18248"/>
    </ligandPart>
</feature>
<feature type="binding site" description="axial binding residue" evidence="2">
    <location>
        <position position="182"/>
    </location>
    <ligand>
        <name>heme b</name>
        <dbReference type="ChEBI" id="CHEBI:60344"/>
        <label>b562</label>
    </ligand>
    <ligandPart>
        <name>Fe</name>
        <dbReference type="ChEBI" id="CHEBI:18248"/>
    </ligandPart>
</feature>
<feature type="binding site" description="axial binding residue" evidence="2">
    <location>
        <position position="196"/>
    </location>
    <ligand>
        <name>heme b</name>
        <dbReference type="ChEBI" id="CHEBI:60344"/>
        <label>b566</label>
    </ligand>
    <ligandPart>
        <name>Fe</name>
        <dbReference type="ChEBI" id="CHEBI:18248"/>
    </ligandPart>
</feature>
<feature type="binding site" evidence="2">
    <location>
        <position position="201"/>
    </location>
    <ligand>
        <name>a ubiquinone</name>
        <dbReference type="ChEBI" id="CHEBI:16389"/>
    </ligand>
</feature>
<dbReference type="EMBL" id="AJ841951">
    <property type="protein sequence ID" value="CAH56544.1"/>
    <property type="molecule type" value="Genomic_DNA"/>
</dbReference>
<dbReference type="SMR" id="Q5F4G7"/>
<dbReference type="GO" id="GO:0005743">
    <property type="term" value="C:mitochondrial inner membrane"/>
    <property type="evidence" value="ECO:0007669"/>
    <property type="project" value="UniProtKB-SubCell"/>
</dbReference>
<dbReference type="GO" id="GO:0045275">
    <property type="term" value="C:respiratory chain complex III"/>
    <property type="evidence" value="ECO:0007669"/>
    <property type="project" value="InterPro"/>
</dbReference>
<dbReference type="GO" id="GO:0046872">
    <property type="term" value="F:metal ion binding"/>
    <property type="evidence" value="ECO:0007669"/>
    <property type="project" value="UniProtKB-KW"/>
</dbReference>
<dbReference type="GO" id="GO:0008121">
    <property type="term" value="F:ubiquinol-cytochrome-c reductase activity"/>
    <property type="evidence" value="ECO:0007669"/>
    <property type="project" value="InterPro"/>
</dbReference>
<dbReference type="GO" id="GO:0006122">
    <property type="term" value="P:mitochondrial electron transport, ubiquinol to cytochrome c"/>
    <property type="evidence" value="ECO:0007669"/>
    <property type="project" value="TreeGrafter"/>
</dbReference>
<dbReference type="CDD" id="cd00290">
    <property type="entry name" value="cytochrome_b_C"/>
    <property type="match status" value="1"/>
</dbReference>
<dbReference type="CDD" id="cd00284">
    <property type="entry name" value="Cytochrome_b_N"/>
    <property type="match status" value="1"/>
</dbReference>
<dbReference type="FunFam" id="1.20.810.10:FF:000002">
    <property type="entry name" value="Cytochrome b"/>
    <property type="match status" value="1"/>
</dbReference>
<dbReference type="Gene3D" id="1.20.810.10">
    <property type="entry name" value="Cytochrome Bc1 Complex, Chain C"/>
    <property type="match status" value="1"/>
</dbReference>
<dbReference type="InterPro" id="IPR005798">
    <property type="entry name" value="Cyt_b/b6_C"/>
</dbReference>
<dbReference type="InterPro" id="IPR036150">
    <property type="entry name" value="Cyt_b/b6_C_sf"/>
</dbReference>
<dbReference type="InterPro" id="IPR005797">
    <property type="entry name" value="Cyt_b/b6_N"/>
</dbReference>
<dbReference type="InterPro" id="IPR027387">
    <property type="entry name" value="Cytb/b6-like_sf"/>
</dbReference>
<dbReference type="InterPro" id="IPR030689">
    <property type="entry name" value="Cytochrome_b"/>
</dbReference>
<dbReference type="InterPro" id="IPR048260">
    <property type="entry name" value="Cytochrome_b_C_euk/bac"/>
</dbReference>
<dbReference type="InterPro" id="IPR048259">
    <property type="entry name" value="Cytochrome_b_N_euk/bac"/>
</dbReference>
<dbReference type="InterPro" id="IPR016174">
    <property type="entry name" value="Di-haem_cyt_TM"/>
</dbReference>
<dbReference type="PANTHER" id="PTHR19271">
    <property type="entry name" value="CYTOCHROME B"/>
    <property type="match status" value="1"/>
</dbReference>
<dbReference type="PANTHER" id="PTHR19271:SF16">
    <property type="entry name" value="CYTOCHROME B"/>
    <property type="match status" value="1"/>
</dbReference>
<dbReference type="Pfam" id="PF00032">
    <property type="entry name" value="Cytochrom_B_C"/>
    <property type="match status" value="1"/>
</dbReference>
<dbReference type="Pfam" id="PF00033">
    <property type="entry name" value="Cytochrome_B"/>
    <property type="match status" value="1"/>
</dbReference>
<dbReference type="PIRSF" id="PIRSF038885">
    <property type="entry name" value="COB"/>
    <property type="match status" value="1"/>
</dbReference>
<dbReference type="SUPFAM" id="SSF81648">
    <property type="entry name" value="a domain/subunit of cytochrome bc1 complex (Ubiquinol-cytochrome c reductase)"/>
    <property type="match status" value="1"/>
</dbReference>
<dbReference type="SUPFAM" id="SSF81342">
    <property type="entry name" value="Transmembrane di-heme cytochromes"/>
    <property type="match status" value="1"/>
</dbReference>
<dbReference type="PROSITE" id="PS51003">
    <property type="entry name" value="CYTB_CTER"/>
    <property type="match status" value="1"/>
</dbReference>
<dbReference type="PROSITE" id="PS51002">
    <property type="entry name" value="CYTB_NTER"/>
    <property type="match status" value="1"/>
</dbReference>
<comment type="function">
    <text evidence="2">Component of the ubiquinol-cytochrome c reductase complex (complex III or cytochrome b-c1 complex) that is part of the mitochondrial respiratory chain. The b-c1 complex mediates electron transfer from ubiquinol to cytochrome c. Contributes to the generation of a proton gradient across the mitochondrial membrane that is then used for ATP synthesis.</text>
</comment>
<comment type="cofactor">
    <cofactor evidence="2">
        <name>heme b</name>
        <dbReference type="ChEBI" id="CHEBI:60344"/>
    </cofactor>
    <text evidence="2">Binds 2 heme b groups non-covalently.</text>
</comment>
<comment type="subunit">
    <text evidence="2">The cytochrome bc1 complex contains 11 subunits: 3 respiratory subunits (MT-CYB, CYC1 and UQCRFS1), 2 core proteins (UQCRC1 and UQCRC2) and 6 low-molecular weight proteins (UQCRH/QCR6, UQCRB/QCR7, UQCRQ/QCR8, UQCR10/QCR9, UQCR11/QCR10 and a cleavage product of UQCRFS1). This cytochrome bc1 complex then forms a dimer.</text>
</comment>
<comment type="subcellular location">
    <subcellularLocation>
        <location evidence="2">Mitochondrion inner membrane</location>
        <topology evidence="2">Multi-pass membrane protein</topology>
    </subcellularLocation>
</comment>
<comment type="miscellaneous">
    <text evidence="1">Heme 1 (or BL or b562) is low-potential and absorbs at about 562 nm, and heme 2 (or BH or b566) is high-potential and absorbs at about 566 nm.</text>
</comment>
<comment type="similarity">
    <text evidence="3 4">Belongs to the cytochrome b family.</text>
</comment>
<comment type="caution">
    <text evidence="2">The full-length protein contains only eight transmembrane helices, not nine as predicted by bioinformatics tools.</text>
</comment>
<proteinExistence type="inferred from homology"/>
<keyword id="KW-0249">Electron transport</keyword>
<keyword id="KW-0349">Heme</keyword>
<keyword id="KW-0408">Iron</keyword>
<keyword id="KW-0472">Membrane</keyword>
<keyword id="KW-0479">Metal-binding</keyword>
<keyword id="KW-0496">Mitochondrion</keyword>
<keyword id="KW-0999">Mitochondrion inner membrane</keyword>
<keyword id="KW-0679">Respiratory chain</keyword>
<keyword id="KW-0812">Transmembrane</keyword>
<keyword id="KW-1133">Transmembrane helix</keyword>
<keyword id="KW-0813">Transport</keyword>
<keyword id="KW-0830">Ubiquinone</keyword>
<protein>
    <recommendedName>
        <fullName>Cytochrome b</fullName>
    </recommendedName>
    <alternativeName>
        <fullName>Complex III subunit 3</fullName>
    </alternativeName>
    <alternativeName>
        <fullName>Complex III subunit III</fullName>
    </alternativeName>
    <alternativeName>
        <fullName>Cytochrome b-c1 complex subunit 3</fullName>
    </alternativeName>
    <alternativeName>
        <fullName>Ubiquinol-cytochrome-c reductase complex cytochrome b subunit</fullName>
    </alternativeName>
</protein>
<sequence>MTNIRKSHPVMKIINNSFIDLPTPSNISSWWNFGSLLGICLALQIMTGLFLAMHYTSDTATAFNSVTHICRDVNYGWILRYLHANGASMFFICLYLHVGRGLYYGSYMYTETWNIGMILLFTMMATAFMGYVLPWGQMSFWGATVITNLLSAIPYIGTNLVEWIWGGFSVDKATLNRFFAFHFLLPFVIAAMVMVHLLFLHETGSNNPTGIPSNADMIPFHPYYTIKDILGLLLMIMTLLTLVLFSPDMLGDPDNYTPANPLSTPPHIKPEWYFLFAYAILRSIPNKLGGVLALILSILILIIMPLLHTSKQRSMAFRPLSQCLYWLLVADLLTLTWVGGQPVEHPFVIIGQLASILYFSIIIILMPLTSLMENHLLKW</sequence>
<name>CYB_MYOSA</name>
<gene>
    <name type="primary">MT-CYB</name>
    <name type="synonym">COB</name>
    <name type="synonym">CYTB</name>
    <name type="synonym">MTCYB</name>
</gene>
<geneLocation type="mitochondrion"/>
<accession>Q5F4G7</accession>
<reference key="1">
    <citation type="journal article" date="2004" name="Acta Chiropt.">
        <title>Phylogeny of African myotis bats (Chiroptera, Vespertilionidae) inferred from cytochrome b sequences.</title>
        <authorList>
            <person name="Stadelmann B."/>
            <person name="Jacobs D.S."/>
            <person name="Schoeman C."/>
            <person name="Ruedi M."/>
        </authorList>
    </citation>
    <scope>NUCLEOTIDE SEQUENCE [GENOMIC DNA]</scope>
    <source>
        <tissue>Wing</tissue>
    </source>
</reference>
<evidence type="ECO:0000250" key="1"/>
<evidence type="ECO:0000250" key="2">
    <source>
        <dbReference type="UniProtKB" id="P00157"/>
    </source>
</evidence>
<evidence type="ECO:0000255" key="3">
    <source>
        <dbReference type="PROSITE-ProRule" id="PRU00967"/>
    </source>
</evidence>
<evidence type="ECO:0000255" key="4">
    <source>
        <dbReference type="PROSITE-ProRule" id="PRU00968"/>
    </source>
</evidence>